<protein>
    <recommendedName>
        <fullName>Alkaline nuclease</fullName>
        <shortName>AN</shortName>
        <ecNumber>3.1.-.-</ecNumber>
    </recommendedName>
</protein>
<dbReference type="EC" id="3.1.-.-"/>
<dbReference type="EMBL" id="M17548">
    <property type="protein sequence ID" value="AAA66807.1"/>
    <property type="molecule type" value="Genomic_DNA"/>
</dbReference>
<dbReference type="EMBL" id="L22858">
    <property type="protein sequence ID" value="AAA66763.1"/>
    <property type="molecule type" value="Genomic_DNA"/>
</dbReference>
<dbReference type="PIR" id="F72866">
    <property type="entry name" value="F72866"/>
</dbReference>
<dbReference type="SMR" id="P24731"/>
<dbReference type="KEGG" id="vg:1403966"/>
<dbReference type="OrthoDB" id="9306at10239"/>
<dbReference type="Proteomes" id="UP000008292">
    <property type="component" value="Segment"/>
</dbReference>
<dbReference type="GO" id="GO:0042025">
    <property type="term" value="C:host cell nucleus"/>
    <property type="evidence" value="ECO:0007669"/>
    <property type="project" value="UniProtKB-SubCell"/>
</dbReference>
<dbReference type="GO" id="GO:0004519">
    <property type="term" value="F:endonuclease activity"/>
    <property type="evidence" value="ECO:0007669"/>
    <property type="project" value="UniProtKB-KW"/>
</dbReference>
<dbReference type="GO" id="GO:0004527">
    <property type="term" value="F:exonuclease activity"/>
    <property type="evidence" value="ECO:0007669"/>
    <property type="project" value="UniProtKB-KW"/>
</dbReference>
<dbReference type="Gene3D" id="3.90.320.10">
    <property type="match status" value="1"/>
</dbReference>
<dbReference type="InterPro" id="IPR051703">
    <property type="entry name" value="NF-kappa-B_Signaling_Reg"/>
</dbReference>
<dbReference type="InterPro" id="IPR011604">
    <property type="entry name" value="PDDEXK-like_dom_sf"/>
</dbReference>
<dbReference type="InterPro" id="IPR011335">
    <property type="entry name" value="Restrct_endonuc-II-like"/>
</dbReference>
<dbReference type="InterPro" id="IPR034720">
    <property type="entry name" value="Viral_alk_exo"/>
</dbReference>
<dbReference type="PANTHER" id="PTHR46609">
    <property type="entry name" value="EXONUCLEASE, PHAGE-TYPE/RECB, C-TERMINAL DOMAIN-CONTAINING PROTEIN"/>
    <property type="match status" value="1"/>
</dbReference>
<dbReference type="PANTHER" id="PTHR46609:SF8">
    <property type="entry name" value="YQAJ VIRAL RECOMBINASE DOMAIN-CONTAINING PROTEIN"/>
    <property type="match status" value="1"/>
</dbReference>
<dbReference type="Pfam" id="PF01771">
    <property type="entry name" value="Viral_alk_exo"/>
    <property type="match status" value="1"/>
</dbReference>
<dbReference type="SUPFAM" id="SSF52980">
    <property type="entry name" value="Restriction endonuclease-like"/>
    <property type="match status" value="1"/>
</dbReference>
<reference key="1">
    <citation type="journal article" date="1987" name="J. Virol.">
        <title>Overlapping sets of viral RNAs reflect the array of polypeptides in the EcoRI J and N fragments (map positions 81.2 to 85.0) of the Autographa californica nuclear polyhedrosis virus genome.</title>
        <authorList>
            <person name="Oellig C."/>
            <person name="Happ B."/>
            <person name="Mueller T."/>
            <person name="Doerfler W."/>
        </authorList>
    </citation>
    <scope>NUCLEOTIDE SEQUENCE [GENOMIC DNA]</scope>
</reference>
<reference key="2">
    <citation type="journal article" date="1994" name="Virology">
        <title>The complete DNA sequence of Autographa californica nuclear polyhedrosis virus.</title>
        <authorList>
            <person name="Ayres M.D."/>
            <person name="Howard S.C."/>
            <person name="Kuzio J."/>
            <person name="Lopez-Ferber M."/>
            <person name="Possee R.D."/>
        </authorList>
    </citation>
    <scope>NUCLEOTIDE SEQUENCE [LARGE SCALE GENOMIC DNA]</scope>
    <source>
        <strain>C6</strain>
    </source>
</reference>
<reference key="3">
    <citation type="journal article" date="2000" name="J. Virol.">
        <title>Characterization of a baculovirus alkaline nuclease.</title>
        <authorList>
            <person name="Li L."/>
            <person name="Rohrmann G.F."/>
        </authorList>
    </citation>
    <scope>FUNCTION</scope>
    <scope>MUTAGENESIS OF GLY-141 AND SER-146</scope>
    <source>
        <strain>E2</strain>
    </source>
</reference>
<reference key="4">
    <citation type="journal article" date="2003" name="J. Virol.">
        <title>Baculovirus alkaline nuclease possesses a 5'--&gt;3' exonuclease activity and associates with the DNA-binding protein LEF-3.</title>
        <authorList>
            <person name="Mikhailov V.S."/>
            <person name="Okano K."/>
            <person name="Rohrmann G.F."/>
        </authorList>
    </citation>
    <scope>INTERACTION WITH LEF-3</scope>
    <source>
        <strain>E2</strain>
    </source>
</reference>
<reference key="5">
    <citation type="journal article" date="2004" name="J. Biol. Chem.">
        <title>Specificity of the endonuclease activity of the baculovirus alkaline nuclease for single-stranded DNA.</title>
        <authorList>
            <person name="Mikhailov V.S."/>
            <person name="Okano K."/>
            <person name="Rohrmann G.F."/>
        </authorList>
    </citation>
    <scope>FUNCTION</scope>
    <scope>ENDONUCLEASE ACTIVITY</scope>
    <source>
        <strain>E2</strain>
    </source>
</reference>
<reference key="6">
    <citation type="journal article" date="2004" name="J. Virol.">
        <title>Characterization of a baculovirus lacking the alkaline nuclease gene.</title>
        <authorList>
            <person name="Okano K."/>
            <person name="Vanarsdall A.L."/>
            <person name="Rohrmann G.F."/>
        </authorList>
    </citation>
    <scope>FUNCTION</scope>
</reference>
<reference key="7">
    <citation type="journal article" date="2007" name="Virology">
        <title>A baculovirus alkaline nuclease knockout construct produces fragmented DNA and aberrant capsids.</title>
        <authorList>
            <person name="Okano K."/>
            <person name="Vanarsdall A.L."/>
            <person name="Rohrmann G.F."/>
        </authorList>
    </citation>
    <scope>FUNCTION</scope>
</reference>
<organismHost>
    <name type="scientific">Lepidoptera</name>
    <name type="common">butterflies and moths</name>
    <dbReference type="NCBI Taxonomy" id="7088"/>
</organismHost>
<sequence length="419" mass="48291">MFASLTSEQKLLLKKYKFNNYVKTIELSQAQLAHWRSNKDIQPKPLDRAEILRVEKATRGQSKNELWTLLRLDRNTASASSNSSGNMLQRPALLFGNAQESHVKETNGIMLDHMREIIESKIMSAVVETVLDCGMFFSPLGLHAASPDAYFSLADGTWIPVEIKCPYNYRDTTVEQMRVELGNGNRKYRVKHTALLVNKKGTPQFEMVKTDAHYKQMQRQMYVMNAPMGFYVVKFKQNLVVVSVPRDETFCNKELSTENNAYVAFAVENSNCARYQCADKRRLSFKTHSCNHNYSGQEIDAMVDRGIYLDYGHLKCAYCDFSSDSRETCDSVLKREHTNCKSFNLKHKNFDNPTYFDYVKRLQSLLKSHHFRNDAKTLAYFGYYLTHTGTLKTFCCGSQNSSPTKHDHLNDCVYYLEIK</sequence>
<gene>
    <name type="primary">AN</name>
    <name type="ORF">ORF133</name>
</gene>
<organism>
    <name type="scientific">Autographa californica nuclear polyhedrosis virus</name>
    <name type="common">AcMNPV</name>
    <dbReference type="NCBI Taxonomy" id="46015"/>
    <lineage>
        <taxon>Viruses</taxon>
        <taxon>Viruses incertae sedis</taxon>
        <taxon>Naldaviricetes</taxon>
        <taxon>Lefavirales</taxon>
        <taxon>Baculoviridae</taxon>
        <taxon>Alphabaculovirus</taxon>
        <taxon>Alphabaculovirus aucalifornicae</taxon>
    </lineage>
</organism>
<name>AN_NPVAC</name>
<keyword id="KW-0255">Endonuclease</keyword>
<keyword id="KW-0269">Exonuclease</keyword>
<keyword id="KW-1048">Host nucleus</keyword>
<keyword id="KW-0378">Hydrolase</keyword>
<keyword id="KW-0426">Late protein</keyword>
<keyword id="KW-0540">Nuclease</keyword>
<keyword id="KW-1185">Reference proteome</keyword>
<proteinExistence type="evidence at protein level"/>
<feature type="chain" id="PRO_0000132811" description="Alkaline nuclease">
    <location>
        <begin position="1"/>
        <end position="419"/>
    </location>
</feature>
<feature type="mutagenesis site" description="65% loss of alkaline exonuclease activity." evidence="1">
    <original>G</original>
    <variation>A</variation>
    <location>
        <position position="141"/>
    </location>
</feature>
<feature type="mutagenesis site" description="90% loss of alkaline exonuclease activity." evidence="1">
    <original>S</original>
    <variation>A</variation>
    <location>
        <position position="146"/>
    </location>
</feature>
<evidence type="ECO:0000269" key="1">
    <source>
    </source>
</evidence>
<evidence type="ECO:0000269" key="2">
    <source>
    </source>
</evidence>
<evidence type="ECO:0000269" key="3">
    <source>
    </source>
</evidence>
<evidence type="ECO:0000269" key="4">
    <source>
    </source>
</evidence>
<evidence type="ECO:0000269" key="5">
    <source>
    </source>
</evidence>
<evidence type="ECO:0000305" key="6"/>
<accession>P24731</accession>
<comment type="function">
    <text evidence="1 3 4 5">May play a role in maturation and encapsidation of viral replicated genome, by promoting DNA homologous recombination. Exhibits endonuclease and 5'-&gt;3' exonuclease activities. The endonuclease activity displays a specificity for ssDNA in vitro.</text>
</comment>
<comment type="subunit">
    <text evidence="2">Interacts with LEF-3.</text>
</comment>
<comment type="subcellular location">
    <subcellularLocation>
        <location evidence="6">Host nucleus</location>
    </subcellularLocation>
</comment>
<comment type="similarity">
    <text evidence="6">Belongs to the baculo-herpesviridae alkaline nuclease family.</text>
</comment>